<dbReference type="EC" id="6.3.4.4" evidence="1"/>
<dbReference type="EMBL" id="CP001298">
    <property type="protein sequence ID" value="ACK81879.1"/>
    <property type="molecule type" value="Genomic_DNA"/>
</dbReference>
<dbReference type="RefSeq" id="WP_003602990.1">
    <property type="nucleotide sequence ID" value="NC_011757.1"/>
</dbReference>
<dbReference type="SMR" id="B7L289"/>
<dbReference type="KEGG" id="mch:Mchl_0962"/>
<dbReference type="HOGENOM" id="CLU_029848_0_0_5"/>
<dbReference type="UniPathway" id="UPA00075">
    <property type="reaction ID" value="UER00335"/>
</dbReference>
<dbReference type="Proteomes" id="UP000002385">
    <property type="component" value="Chromosome"/>
</dbReference>
<dbReference type="GO" id="GO:0005737">
    <property type="term" value="C:cytoplasm"/>
    <property type="evidence" value="ECO:0007669"/>
    <property type="project" value="UniProtKB-SubCell"/>
</dbReference>
<dbReference type="GO" id="GO:0004019">
    <property type="term" value="F:adenylosuccinate synthase activity"/>
    <property type="evidence" value="ECO:0007669"/>
    <property type="project" value="UniProtKB-UniRule"/>
</dbReference>
<dbReference type="GO" id="GO:0005525">
    <property type="term" value="F:GTP binding"/>
    <property type="evidence" value="ECO:0007669"/>
    <property type="project" value="UniProtKB-UniRule"/>
</dbReference>
<dbReference type="GO" id="GO:0000287">
    <property type="term" value="F:magnesium ion binding"/>
    <property type="evidence" value="ECO:0007669"/>
    <property type="project" value="UniProtKB-UniRule"/>
</dbReference>
<dbReference type="GO" id="GO:0044208">
    <property type="term" value="P:'de novo' AMP biosynthetic process"/>
    <property type="evidence" value="ECO:0007669"/>
    <property type="project" value="UniProtKB-UniRule"/>
</dbReference>
<dbReference type="GO" id="GO:0046040">
    <property type="term" value="P:IMP metabolic process"/>
    <property type="evidence" value="ECO:0007669"/>
    <property type="project" value="TreeGrafter"/>
</dbReference>
<dbReference type="CDD" id="cd03108">
    <property type="entry name" value="AdSS"/>
    <property type="match status" value="1"/>
</dbReference>
<dbReference type="FunFam" id="1.10.300.10:FF:000001">
    <property type="entry name" value="Adenylosuccinate synthetase"/>
    <property type="match status" value="1"/>
</dbReference>
<dbReference type="FunFam" id="3.90.170.10:FF:000001">
    <property type="entry name" value="Adenylosuccinate synthetase"/>
    <property type="match status" value="1"/>
</dbReference>
<dbReference type="Gene3D" id="3.40.440.10">
    <property type="entry name" value="Adenylosuccinate Synthetase, subunit A, domain 1"/>
    <property type="match status" value="1"/>
</dbReference>
<dbReference type="Gene3D" id="1.10.300.10">
    <property type="entry name" value="Adenylosuccinate Synthetase, subunit A, domain 2"/>
    <property type="match status" value="1"/>
</dbReference>
<dbReference type="Gene3D" id="3.90.170.10">
    <property type="entry name" value="Adenylosuccinate Synthetase, subunit A, domain 3"/>
    <property type="match status" value="1"/>
</dbReference>
<dbReference type="HAMAP" id="MF_00011">
    <property type="entry name" value="Adenylosucc_synth"/>
    <property type="match status" value="1"/>
</dbReference>
<dbReference type="InterPro" id="IPR018220">
    <property type="entry name" value="Adenylosuccin_syn_GTP-bd"/>
</dbReference>
<dbReference type="InterPro" id="IPR033128">
    <property type="entry name" value="Adenylosuccin_syn_Lys_AS"/>
</dbReference>
<dbReference type="InterPro" id="IPR042109">
    <property type="entry name" value="Adenylosuccinate_synth_dom1"/>
</dbReference>
<dbReference type="InterPro" id="IPR042110">
    <property type="entry name" value="Adenylosuccinate_synth_dom2"/>
</dbReference>
<dbReference type="InterPro" id="IPR042111">
    <property type="entry name" value="Adenylosuccinate_synth_dom3"/>
</dbReference>
<dbReference type="InterPro" id="IPR001114">
    <property type="entry name" value="Adenylosuccinate_synthetase"/>
</dbReference>
<dbReference type="InterPro" id="IPR027417">
    <property type="entry name" value="P-loop_NTPase"/>
</dbReference>
<dbReference type="NCBIfam" id="NF002223">
    <property type="entry name" value="PRK01117.1"/>
    <property type="match status" value="1"/>
</dbReference>
<dbReference type="NCBIfam" id="TIGR00184">
    <property type="entry name" value="purA"/>
    <property type="match status" value="1"/>
</dbReference>
<dbReference type="PANTHER" id="PTHR11846">
    <property type="entry name" value="ADENYLOSUCCINATE SYNTHETASE"/>
    <property type="match status" value="1"/>
</dbReference>
<dbReference type="PANTHER" id="PTHR11846:SF0">
    <property type="entry name" value="ADENYLOSUCCINATE SYNTHETASE"/>
    <property type="match status" value="1"/>
</dbReference>
<dbReference type="Pfam" id="PF00709">
    <property type="entry name" value="Adenylsucc_synt"/>
    <property type="match status" value="1"/>
</dbReference>
<dbReference type="SMART" id="SM00788">
    <property type="entry name" value="Adenylsucc_synt"/>
    <property type="match status" value="1"/>
</dbReference>
<dbReference type="SUPFAM" id="SSF52540">
    <property type="entry name" value="P-loop containing nucleoside triphosphate hydrolases"/>
    <property type="match status" value="1"/>
</dbReference>
<dbReference type="PROSITE" id="PS01266">
    <property type="entry name" value="ADENYLOSUCCIN_SYN_1"/>
    <property type="match status" value="1"/>
</dbReference>
<dbReference type="PROSITE" id="PS00513">
    <property type="entry name" value="ADENYLOSUCCIN_SYN_2"/>
    <property type="match status" value="1"/>
</dbReference>
<comment type="function">
    <text evidence="1">Plays an important role in the de novo pathway of purine nucleotide biosynthesis. Catalyzes the first committed step in the biosynthesis of AMP from IMP.</text>
</comment>
<comment type="catalytic activity">
    <reaction evidence="1">
        <text>IMP + L-aspartate + GTP = N(6)-(1,2-dicarboxyethyl)-AMP + GDP + phosphate + 2 H(+)</text>
        <dbReference type="Rhea" id="RHEA:15753"/>
        <dbReference type="ChEBI" id="CHEBI:15378"/>
        <dbReference type="ChEBI" id="CHEBI:29991"/>
        <dbReference type="ChEBI" id="CHEBI:37565"/>
        <dbReference type="ChEBI" id="CHEBI:43474"/>
        <dbReference type="ChEBI" id="CHEBI:57567"/>
        <dbReference type="ChEBI" id="CHEBI:58053"/>
        <dbReference type="ChEBI" id="CHEBI:58189"/>
        <dbReference type="EC" id="6.3.4.4"/>
    </reaction>
</comment>
<comment type="cofactor">
    <cofactor evidence="1">
        <name>Mg(2+)</name>
        <dbReference type="ChEBI" id="CHEBI:18420"/>
    </cofactor>
    <text evidence="1">Binds 1 Mg(2+) ion per subunit.</text>
</comment>
<comment type="pathway">
    <text evidence="1">Purine metabolism; AMP biosynthesis via de novo pathway; AMP from IMP: step 1/2.</text>
</comment>
<comment type="subunit">
    <text evidence="1">Homodimer.</text>
</comment>
<comment type="subcellular location">
    <subcellularLocation>
        <location evidence="1">Cytoplasm</location>
    </subcellularLocation>
</comment>
<comment type="similarity">
    <text evidence="1">Belongs to the adenylosuccinate synthetase family.</text>
</comment>
<accession>B7L289</accession>
<keyword id="KW-0963">Cytoplasm</keyword>
<keyword id="KW-0342">GTP-binding</keyword>
<keyword id="KW-0436">Ligase</keyword>
<keyword id="KW-0460">Magnesium</keyword>
<keyword id="KW-0479">Metal-binding</keyword>
<keyword id="KW-0547">Nucleotide-binding</keyword>
<keyword id="KW-0658">Purine biosynthesis</keyword>
<reference key="1">
    <citation type="submission" date="2008-12" db="EMBL/GenBank/DDBJ databases">
        <title>Complete sequence of chromosome of Methylobacterium chloromethanicum CM4.</title>
        <authorList>
            <consortium name="US DOE Joint Genome Institute"/>
            <person name="Lucas S."/>
            <person name="Copeland A."/>
            <person name="Lapidus A."/>
            <person name="Glavina del Rio T."/>
            <person name="Dalin E."/>
            <person name="Tice H."/>
            <person name="Bruce D."/>
            <person name="Goodwin L."/>
            <person name="Pitluck S."/>
            <person name="Chertkov O."/>
            <person name="Brettin T."/>
            <person name="Detter J.C."/>
            <person name="Han C."/>
            <person name="Larimer F."/>
            <person name="Land M."/>
            <person name="Hauser L."/>
            <person name="Kyrpides N."/>
            <person name="Mikhailova N."/>
            <person name="Marx C."/>
            <person name="Richardson P."/>
        </authorList>
    </citation>
    <scope>NUCLEOTIDE SEQUENCE [LARGE SCALE GENOMIC DNA]</scope>
    <source>
        <strain>CM4 / NCIMB 13688</strain>
    </source>
</reference>
<feature type="chain" id="PRO_1000194764" description="Adenylosuccinate synthetase">
    <location>
        <begin position="1"/>
        <end position="430"/>
    </location>
</feature>
<feature type="active site" description="Proton acceptor" evidence="1">
    <location>
        <position position="13"/>
    </location>
</feature>
<feature type="active site" description="Proton donor" evidence="1">
    <location>
        <position position="41"/>
    </location>
</feature>
<feature type="binding site" evidence="1">
    <location>
        <begin position="12"/>
        <end position="18"/>
    </location>
    <ligand>
        <name>GTP</name>
        <dbReference type="ChEBI" id="CHEBI:37565"/>
    </ligand>
</feature>
<feature type="binding site" description="in other chain" evidence="1">
    <location>
        <begin position="13"/>
        <end position="16"/>
    </location>
    <ligand>
        <name>IMP</name>
        <dbReference type="ChEBI" id="CHEBI:58053"/>
        <note>ligand shared between dimeric partners</note>
    </ligand>
</feature>
<feature type="binding site" evidence="1">
    <location>
        <position position="13"/>
    </location>
    <ligand>
        <name>Mg(2+)</name>
        <dbReference type="ChEBI" id="CHEBI:18420"/>
    </ligand>
</feature>
<feature type="binding site" description="in other chain" evidence="1">
    <location>
        <begin position="38"/>
        <end position="41"/>
    </location>
    <ligand>
        <name>IMP</name>
        <dbReference type="ChEBI" id="CHEBI:58053"/>
        <note>ligand shared between dimeric partners</note>
    </ligand>
</feature>
<feature type="binding site" evidence="1">
    <location>
        <begin position="40"/>
        <end position="42"/>
    </location>
    <ligand>
        <name>GTP</name>
        <dbReference type="ChEBI" id="CHEBI:37565"/>
    </ligand>
</feature>
<feature type="binding site" evidence="1">
    <location>
        <position position="40"/>
    </location>
    <ligand>
        <name>Mg(2+)</name>
        <dbReference type="ChEBI" id="CHEBI:18420"/>
    </ligand>
</feature>
<feature type="binding site" description="in other chain" evidence="1">
    <location>
        <position position="130"/>
    </location>
    <ligand>
        <name>IMP</name>
        <dbReference type="ChEBI" id="CHEBI:58053"/>
        <note>ligand shared between dimeric partners</note>
    </ligand>
</feature>
<feature type="binding site" evidence="1">
    <location>
        <position position="144"/>
    </location>
    <ligand>
        <name>IMP</name>
        <dbReference type="ChEBI" id="CHEBI:58053"/>
        <note>ligand shared between dimeric partners</note>
    </ligand>
</feature>
<feature type="binding site" description="in other chain" evidence="1">
    <location>
        <position position="224"/>
    </location>
    <ligand>
        <name>IMP</name>
        <dbReference type="ChEBI" id="CHEBI:58053"/>
        <note>ligand shared between dimeric partners</note>
    </ligand>
</feature>
<feature type="binding site" description="in other chain" evidence="1">
    <location>
        <position position="239"/>
    </location>
    <ligand>
        <name>IMP</name>
        <dbReference type="ChEBI" id="CHEBI:58053"/>
        <note>ligand shared between dimeric partners</note>
    </ligand>
</feature>
<feature type="binding site" evidence="1">
    <location>
        <begin position="299"/>
        <end position="305"/>
    </location>
    <ligand>
        <name>substrate</name>
    </ligand>
</feature>
<feature type="binding site" description="in other chain" evidence="1">
    <location>
        <position position="303"/>
    </location>
    <ligand>
        <name>IMP</name>
        <dbReference type="ChEBI" id="CHEBI:58053"/>
        <note>ligand shared between dimeric partners</note>
    </ligand>
</feature>
<feature type="binding site" evidence="1">
    <location>
        <position position="305"/>
    </location>
    <ligand>
        <name>GTP</name>
        <dbReference type="ChEBI" id="CHEBI:37565"/>
    </ligand>
</feature>
<feature type="binding site" evidence="1">
    <location>
        <begin position="331"/>
        <end position="333"/>
    </location>
    <ligand>
        <name>GTP</name>
        <dbReference type="ChEBI" id="CHEBI:37565"/>
    </ligand>
</feature>
<feature type="binding site" evidence="1">
    <location>
        <begin position="413"/>
        <end position="415"/>
    </location>
    <ligand>
        <name>GTP</name>
        <dbReference type="ChEBI" id="CHEBI:37565"/>
    </ligand>
</feature>
<protein>
    <recommendedName>
        <fullName evidence="1">Adenylosuccinate synthetase</fullName>
        <shortName evidence="1">AMPSase</shortName>
        <shortName evidence="1">AdSS</shortName>
        <ecNumber evidence="1">6.3.4.4</ecNumber>
    </recommendedName>
    <alternativeName>
        <fullName evidence="1">IMP--aspartate ligase</fullName>
    </alternativeName>
</protein>
<sequence length="430" mass="46490">MANVVVVGAQWGDEGKGKIVDWLSEQADVVVRFQGGHNAGHTLVVGEAVYKLSLLPSGVVRPNTLGVIGNGVVLDPYALASEIDRLAGQGVTVSRENLRVADNATLILSLHRELDALREDGAPGTKIGTTKRGIGPAYEDKVGRRAIRLMDLAEPETLPPKIERLLAHHNALRRGFGLEEISEQTILDELTGIAERVLPYQDTVWRLLDDARRGGKRILFEGAQGALLDVDHGTYPFVTSSNTVAGQAATGSGLGPRAIGYVLGIAKAYTTRVGEGPFPTELHDEIGQRIGERGHEFGTVTGRKRRCGWFDACLVRQTVKTSGIDGIALTKLDVLDGFDEIRVCTAYDIDGQRFDHLPASQAAQQRAVPVYETIPGWSGTTAGARSWADLPAQAIKYVRRIEELIGAPVALLSTSPERDDTILMHNPFED</sequence>
<name>PURA_METC4</name>
<gene>
    <name evidence="1" type="primary">purA</name>
    <name type="ordered locus">Mchl_0962</name>
</gene>
<organism>
    <name type="scientific">Methylorubrum extorquens (strain CM4 / NCIMB 13688)</name>
    <name type="common">Methylobacterium extorquens</name>
    <dbReference type="NCBI Taxonomy" id="440085"/>
    <lineage>
        <taxon>Bacteria</taxon>
        <taxon>Pseudomonadati</taxon>
        <taxon>Pseudomonadota</taxon>
        <taxon>Alphaproteobacteria</taxon>
        <taxon>Hyphomicrobiales</taxon>
        <taxon>Methylobacteriaceae</taxon>
        <taxon>Methylorubrum</taxon>
    </lineage>
</organism>
<evidence type="ECO:0000255" key="1">
    <source>
        <dbReference type="HAMAP-Rule" id="MF_00011"/>
    </source>
</evidence>
<proteinExistence type="inferred from homology"/>